<comment type="subcellular location">
    <subcellularLocation>
        <location evidence="1">Membrane</location>
        <topology evidence="1">Single-pass membrane protein</topology>
    </subcellularLocation>
</comment>
<comment type="similarity">
    <text evidence="4">Belongs to the CCDC25 family.</text>
</comment>
<keyword id="KW-0175">Coiled coil</keyword>
<keyword id="KW-0472">Membrane</keyword>
<keyword id="KW-1185">Reference proteome</keyword>
<keyword id="KW-0812">Transmembrane</keyword>
<keyword id="KW-1133">Transmembrane helix</keyword>
<gene>
    <name type="primary">ccdc25</name>
    <name type="ORF">DDB_G0269786</name>
</gene>
<name>CCD25_DICDI</name>
<feature type="chain" id="PRO_0000328428" description="Coiled-coil domain-containing protein 25 homolog">
    <location>
        <begin position="1"/>
        <end position="206"/>
    </location>
</feature>
<feature type="topological domain" description="Extracellular" evidence="4">
    <location>
        <begin position="1"/>
        <end position="34"/>
    </location>
</feature>
<feature type="transmembrane region" description="Helical" evidence="2">
    <location>
        <begin position="35"/>
        <end position="51"/>
    </location>
</feature>
<feature type="topological domain" description="Cytoplasmic" evidence="4">
    <location>
        <begin position="52"/>
        <end position="206"/>
    </location>
</feature>
<feature type="region of interest" description="Disordered" evidence="3">
    <location>
        <begin position="138"/>
        <end position="181"/>
    </location>
</feature>
<feature type="coiled-coil region" evidence="2">
    <location>
        <begin position="144"/>
        <end position="182"/>
    </location>
</feature>
<reference key="1">
    <citation type="journal article" date="2005" name="Nature">
        <title>The genome of the social amoeba Dictyostelium discoideum.</title>
        <authorList>
            <person name="Eichinger L."/>
            <person name="Pachebat J.A."/>
            <person name="Gloeckner G."/>
            <person name="Rajandream M.A."/>
            <person name="Sucgang R."/>
            <person name="Berriman M."/>
            <person name="Song J."/>
            <person name="Olsen R."/>
            <person name="Szafranski K."/>
            <person name="Xu Q."/>
            <person name="Tunggal B."/>
            <person name="Kummerfeld S."/>
            <person name="Madera M."/>
            <person name="Konfortov B.A."/>
            <person name="Rivero F."/>
            <person name="Bankier A.T."/>
            <person name="Lehmann R."/>
            <person name="Hamlin N."/>
            <person name="Davies R."/>
            <person name="Gaudet P."/>
            <person name="Fey P."/>
            <person name="Pilcher K."/>
            <person name="Chen G."/>
            <person name="Saunders D."/>
            <person name="Sodergren E.J."/>
            <person name="Davis P."/>
            <person name="Kerhornou A."/>
            <person name="Nie X."/>
            <person name="Hall N."/>
            <person name="Anjard C."/>
            <person name="Hemphill L."/>
            <person name="Bason N."/>
            <person name="Farbrother P."/>
            <person name="Desany B."/>
            <person name="Just E."/>
            <person name="Morio T."/>
            <person name="Rost R."/>
            <person name="Churcher C.M."/>
            <person name="Cooper J."/>
            <person name="Haydock S."/>
            <person name="van Driessche N."/>
            <person name="Cronin A."/>
            <person name="Goodhead I."/>
            <person name="Muzny D.M."/>
            <person name="Mourier T."/>
            <person name="Pain A."/>
            <person name="Lu M."/>
            <person name="Harper D."/>
            <person name="Lindsay R."/>
            <person name="Hauser H."/>
            <person name="James K.D."/>
            <person name="Quiles M."/>
            <person name="Madan Babu M."/>
            <person name="Saito T."/>
            <person name="Buchrieser C."/>
            <person name="Wardroper A."/>
            <person name="Felder M."/>
            <person name="Thangavelu M."/>
            <person name="Johnson D."/>
            <person name="Knights A."/>
            <person name="Loulseged H."/>
            <person name="Mungall K.L."/>
            <person name="Oliver K."/>
            <person name="Price C."/>
            <person name="Quail M.A."/>
            <person name="Urushihara H."/>
            <person name="Hernandez J."/>
            <person name="Rabbinowitsch E."/>
            <person name="Steffen D."/>
            <person name="Sanders M."/>
            <person name="Ma J."/>
            <person name="Kohara Y."/>
            <person name="Sharp S."/>
            <person name="Simmonds M.N."/>
            <person name="Spiegler S."/>
            <person name="Tivey A."/>
            <person name="Sugano S."/>
            <person name="White B."/>
            <person name="Walker D."/>
            <person name="Woodward J.R."/>
            <person name="Winckler T."/>
            <person name="Tanaka Y."/>
            <person name="Shaulsky G."/>
            <person name="Schleicher M."/>
            <person name="Weinstock G.M."/>
            <person name="Rosenthal A."/>
            <person name="Cox E.C."/>
            <person name="Chisholm R.L."/>
            <person name="Gibbs R.A."/>
            <person name="Loomis W.F."/>
            <person name="Platzer M."/>
            <person name="Kay R.R."/>
            <person name="Williams J.G."/>
            <person name="Dear P.H."/>
            <person name="Noegel A.A."/>
            <person name="Barrell B.G."/>
            <person name="Kuspa A."/>
        </authorList>
    </citation>
    <scope>NUCLEOTIDE SEQUENCE [LARGE SCALE GENOMIC DNA]</scope>
    <source>
        <strain>AX4</strain>
    </source>
</reference>
<proteinExistence type="inferred from homology"/>
<evidence type="ECO:0000250" key="1">
    <source>
        <dbReference type="UniProtKB" id="Q86WR0"/>
    </source>
</evidence>
<evidence type="ECO:0000255" key="2"/>
<evidence type="ECO:0000256" key="3">
    <source>
        <dbReference type="SAM" id="MobiDB-lite"/>
    </source>
</evidence>
<evidence type="ECO:0000305" key="4"/>
<sequence length="206" mass="24874">MVLYFKLIDPEYICYMGIDKFENEDLIKYGWPEDVWFHVNDLSSAHVYLRLRKGETWNDIPANILEECCQLVKQNSIQGCKEASVDIVYTPWANLKKTAGMEAGQVLYHNEREVKYVRNVRKDSKIINRIEKTREKREVDLMHERDSRDKSERHEKRKEQEEKRRAEKKAYEEKQKMEDIKKYTSIMKTDNMKFNKYNPTDEDDFM</sequence>
<dbReference type="EMBL" id="AAFI02000005">
    <property type="protein sequence ID" value="EAL72243.1"/>
    <property type="molecule type" value="Genomic_DNA"/>
</dbReference>
<dbReference type="RefSeq" id="XP_646276.1">
    <property type="nucleotide sequence ID" value="XM_641184.1"/>
</dbReference>
<dbReference type="SMR" id="Q55D55"/>
<dbReference type="FunCoup" id="Q55D55">
    <property type="interactions" value="327"/>
</dbReference>
<dbReference type="STRING" id="44689.Q55D55"/>
<dbReference type="PaxDb" id="44689-DDB0304990"/>
<dbReference type="EnsemblProtists" id="EAL72243">
    <property type="protein sequence ID" value="EAL72243"/>
    <property type="gene ID" value="DDB_G0269786"/>
</dbReference>
<dbReference type="GeneID" id="8617232"/>
<dbReference type="KEGG" id="ddi:DDB_G0269786"/>
<dbReference type="dictyBase" id="DDB_G0269786">
    <property type="gene designation" value="ccdc25"/>
</dbReference>
<dbReference type="VEuPathDB" id="AmoebaDB:DDB_G0269786"/>
<dbReference type="eggNOG" id="KOG3272">
    <property type="taxonomic scope" value="Eukaryota"/>
</dbReference>
<dbReference type="HOGENOM" id="CLU_076656_0_1_1"/>
<dbReference type="InParanoid" id="Q55D55"/>
<dbReference type="OMA" id="YHDEKAV"/>
<dbReference type="PhylomeDB" id="Q55D55"/>
<dbReference type="PRO" id="PR:Q55D55"/>
<dbReference type="Proteomes" id="UP000002195">
    <property type="component" value="Chromosome 1"/>
</dbReference>
<dbReference type="GO" id="GO:0016020">
    <property type="term" value="C:membrane"/>
    <property type="evidence" value="ECO:0007669"/>
    <property type="project" value="UniProtKB-SubCell"/>
</dbReference>
<dbReference type="InterPro" id="IPR039730">
    <property type="entry name" value="Jlp2/Ccd25"/>
</dbReference>
<dbReference type="InterPro" id="IPR008532">
    <property type="entry name" value="NFACT_RNA-bd"/>
</dbReference>
<dbReference type="PANTHER" id="PTHR13049:SF2">
    <property type="entry name" value="COILED-COIL DOMAIN-CONTAINING PROTEIN 25"/>
    <property type="match status" value="1"/>
</dbReference>
<dbReference type="PANTHER" id="PTHR13049">
    <property type="entry name" value="DUF814-RELATED"/>
    <property type="match status" value="1"/>
</dbReference>
<dbReference type="Pfam" id="PF05670">
    <property type="entry name" value="NFACT-R_1"/>
    <property type="match status" value="1"/>
</dbReference>
<organism>
    <name type="scientific">Dictyostelium discoideum</name>
    <name type="common">Social amoeba</name>
    <dbReference type="NCBI Taxonomy" id="44689"/>
    <lineage>
        <taxon>Eukaryota</taxon>
        <taxon>Amoebozoa</taxon>
        <taxon>Evosea</taxon>
        <taxon>Eumycetozoa</taxon>
        <taxon>Dictyostelia</taxon>
        <taxon>Dictyosteliales</taxon>
        <taxon>Dictyosteliaceae</taxon>
        <taxon>Dictyostelium</taxon>
    </lineage>
</organism>
<protein>
    <recommendedName>
        <fullName>Coiled-coil domain-containing protein 25 homolog</fullName>
    </recommendedName>
</protein>
<accession>Q55D55</accession>